<proteinExistence type="predicted"/>
<gene>
    <name type="ordered locus">At1g33530</name>
    <name type="ORF">F10C21.17</name>
</gene>
<dbReference type="EMBL" id="AC051630">
    <property type="protein sequence ID" value="AAG51205.1"/>
    <property type="molecule type" value="Genomic_DNA"/>
</dbReference>
<dbReference type="EMBL" id="CP002684">
    <property type="protein sequence ID" value="AEE31603.1"/>
    <property type="molecule type" value="Genomic_DNA"/>
</dbReference>
<dbReference type="PIR" id="B86459">
    <property type="entry name" value="B86459"/>
</dbReference>
<dbReference type="RefSeq" id="NP_174618.1">
    <property type="nucleotide sequence ID" value="NM_103077.1"/>
</dbReference>
<dbReference type="SMR" id="Q9C800"/>
<dbReference type="FunCoup" id="Q9C800">
    <property type="interactions" value="26"/>
</dbReference>
<dbReference type="iPTMnet" id="Q9C800"/>
<dbReference type="PaxDb" id="3702-AT1G33530.1"/>
<dbReference type="EnsemblPlants" id="AT1G33530.1">
    <property type="protein sequence ID" value="AT1G33530.1"/>
    <property type="gene ID" value="AT1G33530"/>
</dbReference>
<dbReference type="GeneID" id="840247"/>
<dbReference type="Gramene" id="AT1G33530.1">
    <property type="protein sequence ID" value="AT1G33530.1"/>
    <property type="gene ID" value="AT1G33530"/>
</dbReference>
<dbReference type="KEGG" id="ath:AT1G33530"/>
<dbReference type="Araport" id="AT1G33530"/>
<dbReference type="TAIR" id="AT1G33530"/>
<dbReference type="HOGENOM" id="CLU_027176_4_2_1"/>
<dbReference type="InParanoid" id="Q9C800"/>
<dbReference type="OMA" id="GPMPLSC"/>
<dbReference type="PhylomeDB" id="Q9C800"/>
<dbReference type="PRO" id="PR:Q9C800"/>
<dbReference type="Proteomes" id="UP000006548">
    <property type="component" value="Chromosome 1"/>
</dbReference>
<dbReference type="CDD" id="cd22157">
    <property type="entry name" value="F-box_AtFBW1-like"/>
    <property type="match status" value="1"/>
</dbReference>
<dbReference type="Gene3D" id="1.20.1280.50">
    <property type="match status" value="1"/>
</dbReference>
<dbReference type="InterPro" id="IPR017451">
    <property type="entry name" value="F-box-assoc_interact_dom"/>
</dbReference>
<dbReference type="InterPro" id="IPR036047">
    <property type="entry name" value="F-box-like_dom_sf"/>
</dbReference>
<dbReference type="InterPro" id="IPR001810">
    <property type="entry name" value="F-box_dom"/>
</dbReference>
<dbReference type="InterPro" id="IPR050796">
    <property type="entry name" value="SCF_F-box_component"/>
</dbReference>
<dbReference type="NCBIfam" id="TIGR01640">
    <property type="entry name" value="F_box_assoc_1"/>
    <property type="match status" value="1"/>
</dbReference>
<dbReference type="PANTHER" id="PTHR31672">
    <property type="entry name" value="BNACNNG10540D PROTEIN"/>
    <property type="match status" value="1"/>
</dbReference>
<dbReference type="PANTHER" id="PTHR31672:SF13">
    <property type="entry name" value="F-BOX PROTEIN CPR30-LIKE"/>
    <property type="match status" value="1"/>
</dbReference>
<dbReference type="Pfam" id="PF00646">
    <property type="entry name" value="F-box"/>
    <property type="match status" value="1"/>
</dbReference>
<dbReference type="SMART" id="SM00256">
    <property type="entry name" value="FBOX"/>
    <property type="match status" value="1"/>
</dbReference>
<dbReference type="SUPFAM" id="SSF81383">
    <property type="entry name" value="F-box domain"/>
    <property type="match status" value="1"/>
</dbReference>
<dbReference type="SUPFAM" id="SSF69304">
    <property type="entry name" value="Tricorn protease N-terminal domain"/>
    <property type="match status" value="1"/>
</dbReference>
<dbReference type="PROSITE" id="PS50181">
    <property type="entry name" value="FBOX"/>
    <property type="match status" value="1"/>
</dbReference>
<sequence>MTFSIEKLVDLKRKKWQSKLQNTKKQVLGRCLTNFSRLLSFRKKQETNGKSPRCSKATLAVVVHPTASTTHDDFLRKKQERSGKSPSCSETTLAVELPDVLVEEILQRLPVKYLVRLKSISKGWKSLIESDHLAEKHLRLLEKKYGLKEIKITVERSTSKSICIKFFSRRSGMNAINSDSDDLLRVPGSCNGLVCVYELDSVYIYLLNPMTGVTRTLTPPRGTKLSVGFGIDVVTGTYKVMVLYGFDRVGTVVFDLDTNKWRQRYKTAGPMPLSCIPTPERNPVFVNGSLFWLLASDFSEILVMDLHTEKFRTLSQPNDMDDVDVSSGYIYMWSLEDRLCVSNVRQGLHSYVWVLVQDELSEKWERTRFNLLGHVFPPLSLNSAWFSQTLVSPYQLSSSTCIGSRQRQNSTSALFSRNGDTGAMDAPIELHISVSTPMMPL</sequence>
<accession>Q9C800</accession>
<name>FB34_ARATH</name>
<protein>
    <recommendedName>
        <fullName>Putative F-box protein At1g33530</fullName>
    </recommendedName>
</protein>
<evidence type="ECO:0000255" key="1">
    <source>
        <dbReference type="PROSITE-ProRule" id="PRU00080"/>
    </source>
</evidence>
<organism>
    <name type="scientific">Arabidopsis thaliana</name>
    <name type="common">Mouse-ear cress</name>
    <dbReference type="NCBI Taxonomy" id="3702"/>
    <lineage>
        <taxon>Eukaryota</taxon>
        <taxon>Viridiplantae</taxon>
        <taxon>Streptophyta</taxon>
        <taxon>Embryophyta</taxon>
        <taxon>Tracheophyta</taxon>
        <taxon>Spermatophyta</taxon>
        <taxon>Magnoliopsida</taxon>
        <taxon>eudicotyledons</taxon>
        <taxon>Gunneridae</taxon>
        <taxon>Pentapetalae</taxon>
        <taxon>rosids</taxon>
        <taxon>malvids</taxon>
        <taxon>Brassicales</taxon>
        <taxon>Brassicaceae</taxon>
        <taxon>Camelineae</taxon>
        <taxon>Arabidopsis</taxon>
    </lineage>
</organism>
<feature type="chain" id="PRO_0000283310" description="Putative F-box protein At1g33530">
    <location>
        <begin position="1"/>
        <end position="441"/>
    </location>
</feature>
<feature type="domain" description="F-box" evidence="1">
    <location>
        <begin position="91"/>
        <end position="137"/>
    </location>
</feature>
<reference key="1">
    <citation type="journal article" date="2000" name="Nature">
        <title>Sequence and analysis of chromosome 1 of the plant Arabidopsis thaliana.</title>
        <authorList>
            <person name="Theologis A."/>
            <person name="Ecker J.R."/>
            <person name="Palm C.J."/>
            <person name="Federspiel N.A."/>
            <person name="Kaul S."/>
            <person name="White O."/>
            <person name="Alonso J."/>
            <person name="Altafi H."/>
            <person name="Araujo R."/>
            <person name="Bowman C.L."/>
            <person name="Brooks S.Y."/>
            <person name="Buehler E."/>
            <person name="Chan A."/>
            <person name="Chao Q."/>
            <person name="Chen H."/>
            <person name="Cheuk R.F."/>
            <person name="Chin C.W."/>
            <person name="Chung M.K."/>
            <person name="Conn L."/>
            <person name="Conway A.B."/>
            <person name="Conway A.R."/>
            <person name="Creasy T.H."/>
            <person name="Dewar K."/>
            <person name="Dunn P."/>
            <person name="Etgu P."/>
            <person name="Feldblyum T.V."/>
            <person name="Feng J.-D."/>
            <person name="Fong B."/>
            <person name="Fujii C.Y."/>
            <person name="Gill J.E."/>
            <person name="Goldsmith A.D."/>
            <person name="Haas B."/>
            <person name="Hansen N.F."/>
            <person name="Hughes B."/>
            <person name="Huizar L."/>
            <person name="Hunter J.L."/>
            <person name="Jenkins J."/>
            <person name="Johnson-Hopson C."/>
            <person name="Khan S."/>
            <person name="Khaykin E."/>
            <person name="Kim C.J."/>
            <person name="Koo H.L."/>
            <person name="Kremenetskaia I."/>
            <person name="Kurtz D.B."/>
            <person name="Kwan A."/>
            <person name="Lam B."/>
            <person name="Langin-Hooper S."/>
            <person name="Lee A."/>
            <person name="Lee J.M."/>
            <person name="Lenz C.A."/>
            <person name="Li J.H."/>
            <person name="Li Y.-P."/>
            <person name="Lin X."/>
            <person name="Liu S.X."/>
            <person name="Liu Z.A."/>
            <person name="Luros J.S."/>
            <person name="Maiti R."/>
            <person name="Marziali A."/>
            <person name="Militscher J."/>
            <person name="Miranda M."/>
            <person name="Nguyen M."/>
            <person name="Nierman W.C."/>
            <person name="Osborne B.I."/>
            <person name="Pai G."/>
            <person name="Peterson J."/>
            <person name="Pham P.K."/>
            <person name="Rizzo M."/>
            <person name="Rooney T."/>
            <person name="Rowley D."/>
            <person name="Sakano H."/>
            <person name="Salzberg S.L."/>
            <person name="Schwartz J.R."/>
            <person name="Shinn P."/>
            <person name="Southwick A.M."/>
            <person name="Sun H."/>
            <person name="Tallon L.J."/>
            <person name="Tambunga G."/>
            <person name="Toriumi M.J."/>
            <person name="Town C.D."/>
            <person name="Utterback T."/>
            <person name="Van Aken S."/>
            <person name="Vaysberg M."/>
            <person name="Vysotskaia V.S."/>
            <person name="Walker M."/>
            <person name="Wu D."/>
            <person name="Yu G."/>
            <person name="Fraser C.M."/>
            <person name="Venter J.C."/>
            <person name="Davis R.W."/>
        </authorList>
    </citation>
    <scope>NUCLEOTIDE SEQUENCE [LARGE SCALE GENOMIC DNA]</scope>
    <source>
        <strain>cv. Columbia</strain>
    </source>
</reference>
<reference key="2">
    <citation type="journal article" date="2017" name="Plant J.">
        <title>Araport11: a complete reannotation of the Arabidopsis thaliana reference genome.</title>
        <authorList>
            <person name="Cheng C.Y."/>
            <person name="Krishnakumar V."/>
            <person name="Chan A.P."/>
            <person name="Thibaud-Nissen F."/>
            <person name="Schobel S."/>
            <person name="Town C.D."/>
        </authorList>
    </citation>
    <scope>GENOME REANNOTATION</scope>
    <source>
        <strain>cv. Columbia</strain>
    </source>
</reference>
<keyword id="KW-1185">Reference proteome</keyword>